<feature type="chain" id="PRO_1000139302" description="Probable cyclic pyranopterin monophosphate synthase">
    <location>
        <begin position="1"/>
        <end position="156"/>
    </location>
</feature>
<feature type="active site" evidence="1">
    <location>
        <position position="125"/>
    </location>
</feature>
<feature type="binding site" evidence="1">
    <location>
        <begin position="74"/>
        <end position="76"/>
    </location>
    <ligand>
        <name>substrate</name>
    </ligand>
</feature>
<feature type="binding site" evidence="1">
    <location>
        <begin position="110"/>
        <end position="111"/>
    </location>
    <ligand>
        <name>substrate</name>
    </ligand>
</feature>
<proteinExistence type="inferred from homology"/>
<dbReference type="EC" id="4.6.1.17" evidence="1"/>
<dbReference type="EMBL" id="CP000855">
    <property type="protein sequence ID" value="ACJ16201.1"/>
    <property type="molecule type" value="Genomic_DNA"/>
</dbReference>
<dbReference type="RefSeq" id="WP_012571673.1">
    <property type="nucleotide sequence ID" value="NC_011529.1"/>
</dbReference>
<dbReference type="SMR" id="B6YVC3"/>
<dbReference type="STRING" id="523850.TON_0713"/>
<dbReference type="GeneID" id="7017014"/>
<dbReference type="KEGG" id="ton:TON_0713"/>
<dbReference type="PATRIC" id="fig|523850.10.peg.716"/>
<dbReference type="eggNOG" id="arCOG01530">
    <property type="taxonomic scope" value="Archaea"/>
</dbReference>
<dbReference type="HOGENOM" id="CLU_074693_1_2_2"/>
<dbReference type="OrthoDB" id="10067at2157"/>
<dbReference type="UniPathway" id="UPA00344"/>
<dbReference type="Proteomes" id="UP000002727">
    <property type="component" value="Chromosome"/>
</dbReference>
<dbReference type="GO" id="GO:0061799">
    <property type="term" value="F:cyclic pyranopterin monophosphate synthase activity"/>
    <property type="evidence" value="ECO:0007669"/>
    <property type="project" value="UniProtKB-UniRule"/>
</dbReference>
<dbReference type="GO" id="GO:0006777">
    <property type="term" value="P:Mo-molybdopterin cofactor biosynthetic process"/>
    <property type="evidence" value="ECO:0007669"/>
    <property type="project" value="UniProtKB-UniRule"/>
</dbReference>
<dbReference type="CDD" id="cd01419">
    <property type="entry name" value="MoaC_A"/>
    <property type="match status" value="1"/>
</dbReference>
<dbReference type="Gene3D" id="3.30.70.640">
    <property type="entry name" value="Molybdopterin cofactor biosynthesis C (MoaC) domain"/>
    <property type="match status" value="1"/>
</dbReference>
<dbReference type="HAMAP" id="MF_01224_A">
    <property type="entry name" value="MoaC_A"/>
    <property type="match status" value="1"/>
</dbReference>
<dbReference type="InterPro" id="IPR023047">
    <property type="entry name" value="Mo_CF_biosynth-C_arc"/>
</dbReference>
<dbReference type="InterPro" id="IPR023045">
    <property type="entry name" value="MoaC"/>
</dbReference>
<dbReference type="InterPro" id="IPR036522">
    <property type="entry name" value="MoaC_sf"/>
</dbReference>
<dbReference type="InterPro" id="IPR002820">
    <property type="entry name" value="Mopterin_CF_biosynth-C_dom"/>
</dbReference>
<dbReference type="NCBIfam" id="TIGR00581">
    <property type="entry name" value="moaC"/>
    <property type="match status" value="1"/>
</dbReference>
<dbReference type="NCBIfam" id="NF006870">
    <property type="entry name" value="PRK09364.1"/>
    <property type="match status" value="1"/>
</dbReference>
<dbReference type="NCBIfam" id="NF008999">
    <property type="entry name" value="PRK12343.1"/>
    <property type="match status" value="1"/>
</dbReference>
<dbReference type="Pfam" id="PF01967">
    <property type="entry name" value="MoaC"/>
    <property type="match status" value="1"/>
</dbReference>
<dbReference type="SUPFAM" id="SSF55040">
    <property type="entry name" value="Molybdenum cofactor biosynthesis protein C, MoaC"/>
    <property type="match status" value="1"/>
</dbReference>
<evidence type="ECO:0000255" key="1">
    <source>
        <dbReference type="HAMAP-Rule" id="MF_01224"/>
    </source>
</evidence>
<keyword id="KW-0456">Lyase</keyword>
<keyword id="KW-0501">Molybdenum cofactor biosynthesis</keyword>
<reference key="1">
    <citation type="journal article" date="2008" name="J. Bacteriol.">
        <title>The complete genome sequence of Thermococcus onnurineus NA1 reveals a mixed heterotrophic and carboxydotrophic metabolism.</title>
        <authorList>
            <person name="Lee H.S."/>
            <person name="Kang S.G."/>
            <person name="Bae S.S."/>
            <person name="Lim J.K."/>
            <person name="Cho Y."/>
            <person name="Kim Y.J."/>
            <person name="Jeon J.H."/>
            <person name="Cha S.-S."/>
            <person name="Kwon K.K."/>
            <person name="Kim H.-T."/>
            <person name="Park C.-J."/>
            <person name="Lee H.-W."/>
            <person name="Kim S.I."/>
            <person name="Chun J."/>
            <person name="Colwell R.R."/>
            <person name="Kim S.-J."/>
            <person name="Lee J.-H."/>
        </authorList>
    </citation>
    <scope>NUCLEOTIDE SEQUENCE [LARGE SCALE GENOMIC DNA]</scope>
    <source>
        <strain>NA1</strain>
    </source>
</reference>
<name>MOAC_THEON</name>
<comment type="function">
    <text evidence="1">Catalyzes the conversion of (8S)-3',8-cyclo-7,8-dihydroguanosine 5'-triphosphate to cyclic pyranopterin monophosphate (cPMP).</text>
</comment>
<comment type="catalytic activity">
    <reaction evidence="1">
        <text>(8S)-3',8-cyclo-7,8-dihydroguanosine 5'-triphosphate = cyclic pyranopterin phosphate + diphosphate</text>
        <dbReference type="Rhea" id="RHEA:49580"/>
        <dbReference type="ChEBI" id="CHEBI:33019"/>
        <dbReference type="ChEBI" id="CHEBI:59648"/>
        <dbReference type="ChEBI" id="CHEBI:131766"/>
        <dbReference type="EC" id="4.6.1.17"/>
    </reaction>
</comment>
<comment type="pathway">
    <text evidence="1">Cofactor biosynthesis; molybdopterin biosynthesis.</text>
</comment>
<comment type="subunit">
    <text evidence="1">Homohexamer; trimer of dimers.</text>
</comment>
<comment type="similarity">
    <text evidence="1">Belongs to the MoaC family.</text>
</comment>
<accession>B6YVC3</accession>
<protein>
    <recommendedName>
        <fullName evidence="1">Probable cyclic pyranopterin monophosphate synthase</fullName>
        <ecNumber evidence="1">4.6.1.17</ecNumber>
    </recommendedName>
    <alternativeName>
        <fullName evidence="1">Molybdenum cofactor biosynthesis protein C</fullName>
    </alternativeName>
</protein>
<gene>
    <name evidence="1" type="primary">moaC</name>
    <name type="ordered locus">TON_0713</name>
</gene>
<sequence length="156" mass="17337">MKELTHVDEKGVKMVEVGHKREVLRKAVAKGRIRLRPETIELIKAGKTKKGNVIATAQIAGILAVKKTPELIPLCHPIPLTGVDISFEFGEDYIEATCEVRATYKTGVEMEALMGVTLALLTIWDMVKAVEKDEQGQYPFTRIEGIHVVEKVKEEG</sequence>
<organism>
    <name type="scientific">Thermococcus onnurineus (strain NA1)</name>
    <dbReference type="NCBI Taxonomy" id="523850"/>
    <lineage>
        <taxon>Archaea</taxon>
        <taxon>Methanobacteriati</taxon>
        <taxon>Methanobacteriota</taxon>
        <taxon>Thermococci</taxon>
        <taxon>Thermococcales</taxon>
        <taxon>Thermococcaceae</taxon>
        <taxon>Thermococcus</taxon>
    </lineage>
</organism>